<proteinExistence type="inferred from homology"/>
<evidence type="ECO:0000255" key="1">
    <source>
        <dbReference type="HAMAP-Rule" id="MF_00230"/>
    </source>
</evidence>
<organism>
    <name type="scientific">Xanthomonas oryzae pv. oryzae (strain PXO99A)</name>
    <dbReference type="NCBI Taxonomy" id="360094"/>
    <lineage>
        <taxon>Bacteria</taxon>
        <taxon>Pseudomonadati</taxon>
        <taxon>Pseudomonadota</taxon>
        <taxon>Gammaproteobacteria</taxon>
        <taxon>Lysobacterales</taxon>
        <taxon>Lysobacteraceae</taxon>
        <taxon>Xanthomonas</taxon>
    </lineage>
</organism>
<keyword id="KW-0169">Cobalamin biosynthesis</keyword>
<keyword id="KW-0328">Glycosyltransferase</keyword>
<keyword id="KW-0808">Transferase</keyword>
<comment type="function">
    <text evidence="1">Catalyzes the synthesis of alpha-ribazole-5'-phosphate from nicotinate mononucleotide (NAMN) and 5,6-dimethylbenzimidazole (DMB).</text>
</comment>
<comment type="catalytic activity">
    <reaction evidence="1">
        <text>5,6-dimethylbenzimidazole + nicotinate beta-D-ribonucleotide = alpha-ribazole 5'-phosphate + nicotinate + H(+)</text>
        <dbReference type="Rhea" id="RHEA:11196"/>
        <dbReference type="ChEBI" id="CHEBI:15378"/>
        <dbReference type="ChEBI" id="CHEBI:15890"/>
        <dbReference type="ChEBI" id="CHEBI:32544"/>
        <dbReference type="ChEBI" id="CHEBI:57502"/>
        <dbReference type="ChEBI" id="CHEBI:57918"/>
        <dbReference type="EC" id="2.4.2.21"/>
    </reaction>
</comment>
<comment type="pathway">
    <text evidence="1">Nucleoside biosynthesis; alpha-ribazole biosynthesis; alpha-ribazole from 5,6-dimethylbenzimidazole: step 1/2.</text>
</comment>
<comment type="similarity">
    <text evidence="1">Belongs to the CobT family.</text>
</comment>
<name>COBT_XANOP</name>
<feature type="chain" id="PRO_1000100483" description="Nicotinate-nucleotide--dimethylbenzimidazole phosphoribosyltransferase">
    <location>
        <begin position="1"/>
        <end position="348"/>
    </location>
</feature>
<feature type="active site" description="Proton acceptor" evidence="1">
    <location>
        <position position="316"/>
    </location>
</feature>
<gene>
    <name evidence="1" type="primary">cobT</name>
    <name type="ordered locus">PXO_01924</name>
</gene>
<protein>
    <recommendedName>
        <fullName evidence="1">Nicotinate-nucleotide--dimethylbenzimidazole phosphoribosyltransferase</fullName>
        <shortName evidence="1">NN:DBI PRT</shortName>
        <ecNumber evidence="1">2.4.2.21</ecNumber>
    </recommendedName>
    <alternativeName>
        <fullName evidence="1">N(1)-alpha-phosphoribosyltransferase</fullName>
    </alternativeName>
</protein>
<dbReference type="EC" id="2.4.2.21" evidence="1"/>
<dbReference type="EMBL" id="CP000967">
    <property type="protein sequence ID" value="ACD60444.1"/>
    <property type="molecule type" value="Genomic_DNA"/>
</dbReference>
<dbReference type="RefSeq" id="WP_012445746.1">
    <property type="nucleotide sequence ID" value="NC_010717.2"/>
</dbReference>
<dbReference type="SMR" id="B2SJ67"/>
<dbReference type="KEGG" id="xop:PXO_01924"/>
<dbReference type="eggNOG" id="COG2038">
    <property type="taxonomic scope" value="Bacteria"/>
</dbReference>
<dbReference type="HOGENOM" id="CLU_002982_0_1_6"/>
<dbReference type="UniPathway" id="UPA00061">
    <property type="reaction ID" value="UER00516"/>
</dbReference>
<dbReference type="Proteomes" id="UP000001740">
    <property type="component" value="Chromosome"/>
</dbReference>
<dbReference type="GO" id="GO:0008939">
    <property type="term" value="F:nicotinate-nucleotide-dimethylbenzimidazole phosphoribosyltransferase activity"/>
    <property type="evidence" value="ECO:0007669"/>
    <property type="project" value="UniProtKB-UniRule"/>
</dbReference>
<dbReference type="GO" id="GO:0009236">
    <property type="term" value="P:cobalamin biosynthetic process"/>
    <property type="evidence" value="ECO:0007669"/>
    <property type="project" value="UniProtKB-KW"/>
</dbReference>
<dbReference type="CDD" id="cd02439">
    <property type="entry name" value="DMB-PRT_CobT"/>
    <property type="match status" value="1"/>
</dbReference>
<dbReference type="FunFam" id="3.40.50.10210:FF:000001">
    <property type="entry name" value="Nicotinate-nucleotide--dimethylbenzimidazole phosphoribosyltransferase"/>
    <property type="match status" value="1"/>
</dbReference>
<dbReference type="Gene3D" id="1.10.1610.10">
    <property type="match status" value="1"/>
</dbReference>
<dbReference type="Gene3D" id="3.40.50.10210">
    <property type="match status" value="1"/>
</dbReference>
<dbReference type="HAMAP" id="MF_00230">
    <property type="entry name" value="CobT"/>
    <property type="match status" value="1"/>
</dbReference>
<dbReference type="InterPro" id="IPR003200">
    <property type="entry name" value="Nict_dMeBzImd_PRibTrfase"/>
</dbReference>
<dbReference type="InterPro" id="IPR017846">
    <property type="entry name" value="Nict_dMeBzImd_PRibTrfase_bact"/>
</dbReference>
<dbReference type="InterPro" id="IPR023195">
    <property type="entry name" value="Nict_dMeBzImd_PRibTrfase_N"/>
</dbReference>
<dbReference type="InterPro" id="IPR036087">
    <property type="entry name" value="Nict_dMeBzImd_PRibTrfase_sf"/>
</dbReference>
<dbReference type="NCBIfam" id="TIGR03160">
    <property type="entry name" value="cobT_DBIPRT"/>
    <property type="match status" value="1"/>
</dbReference>
<dbReference type="NCBIfam" id="NF000996">
    <property type="entry name" value="PRK00105.1"/>
    <property type="match status" value="1"/>
</dbReference>
<dbReference type="PANTHER" id="PTHR43463">
    <property type="entry name" value="NICOTINATE-NUCLEOTIDE--DIMETHYLBENZIMIDAZOLE PHOSPHORIBOSYLTRANSFERASE"/>
    <property type="match status" value="1"/>
</dbReference>
<dbReference type="PANTHER" id="PTHR43463:SF1">
    <property type="entry name" value="NICOTINATE-NUCLEOTIDE--DIMETHYLBENZIMIDAZOLE PHOSPHORIBOSYLTRANSFERASE"/>
    <property type="match status" value="1"/>
</dbReference>
<dbReference type="Pfam" id="PF02277">
    <property type="entry name" value="DBI_PRT"/>
    <property type="match status" value="1"/>
</dbReference>
<dbReference type="SUPFAM" id="SSF52733">
    <property type="entry name" value="Nicotinate mononucleotide:5,6-dimethylbenzimidazole phosphoribosyltransferase (CobT)"/>
    <property type="match status" value="1"/>
</dbReference>
<sequence length="348" mass="35954">MSNDWIFGACAVPDARMRSAALARQEQLTKPPGALGRLEQLAVQVAAWQRTEHPAVQRVWIAVYAADHGVAAEGVSAFPQAVTGEMVRNFARGGAAIAVLARELGARLEVVNLGVVNDPGDLSRVRRAWIAPSTANICEQPAMTATQLRDALAAGAHSIAQAKSCDTQLFVGGEMGIGNTTAAAALGCALLSQFPQALAGAGTGLDAEGIAHKVTVITRALALHADASTPLERLRRLGGFEIAALVGAYIAAAQAGIPVLVDGFIATAAALVATRLNPGVREWLLFGHRSQERGHAALLRALDAEPLLQLDLRLGEASGAAVAIPLLRSACALHNGMATFAEAGVSDA</sequence>
<reference key="1">
    <citation type="journal article" date="2008" name="BMC Genomics">
        <title>Genome sequence and rapid evolution of the rice pathogen Xanthomonas oryzae pv. oryzae PXO99A.</title>
        <authorList>
            <person name="Salzberg S.L."/>
            <person name="Sommer D.D."/>
            <person name="Schatz M.C."/>
            <person name="Phillippy A.M."/>
            <person name="Rabinowicz P.D."/>
            <person name="Tsuge S."/>
            <person name="Furutani A."/>
            <person name="Ochiai H."/>
            <person name="Delcher A.L."/>
            <person name="Kelley D."/>
            <person name="Madupu R."/>
            <person name="Puiu D."/>
            <person name="Radune D."/>
            <person name="Shumway M."/>
            <person name="Trapnell C."/>
            <person name="Aparna G."/>
            <person name="Jha G."/>
            <person name="Pandey A."/>
            <person name="Patil P.B."/>
            <person name="Ishihara H."/>
            <person name="Meyer D.F."/>
            <person name="Szurek B."/>
            <person name="Verdier V."/>
            <person name="Koebnik R."/>
            <person name="Dow J.M."/>
            <person name="Ryan R.P."/>
            <person name="Hirata H."/>
            <person name="Tsuyumu S."/>
            <person name="Won Lee S."/>
            <person name="Seo Y.-S."/>
            <person name="Sriariyanum M."/>
            <person name="Ronald P.C."/>
            <person name="Sonti R.V."/>
            <person name="Van Sluys M.-A."/>
            <person name="Leach J.E."/>
            <person name="White F.F."/>
            <person name="Bogdanove A.J."/>
        </authorList>
    </citation>
    <scope>NUCLEOTIDE SEQUENCE [LARGE SCALE GENOMIC DNA]</scope>
    <source>
        <strain>PXO99A</strain>
    </source>
</reference>
<accession>B2SJ67</accession>